<keyword id="KW-0067">ATP-binding</keyword>
<keyword id="KW-0963">Cytoplasm</keyword>
<keyword id="KW-0235">DNA replication</keyword>
<keyword id="KW-0238">DNA-binding</keyword>
<keyword id="KW-0446">Lipid-binding</keyword>
<keyword id="KW-0547">Nucleotide-binding</keyword>
<keyword id="KW-1185">Reference proteome</keyword>
<reference key="1">
    <citation type="journal article" date="2003" name="Proc. Natl. Acad. Sci. U.S.A.">
        <title>The complete genome sequence of the Arabidopsis and tomato pathogen Pseudomonas syringae pv. tomato DC3000.</title>
        <authorList>
            <person name="Buell C.R."/>
            <person name="Joardar V."/>
            <person name="Lindeberg M."/>
            <person name="Selengut J."/>
            <person name="Paulsen I.T."/>
            <person name="Gwinn M.L."/>
            <person name="Dodson R.J."/>
            <person name="DeBoy R.T."/>
            <person name="Durkin A.S."/>
            <person name="Kolonay J.F."/>
            <person name="Madupu R."/>
            <person name="Daugherty S.C."/>
            <person name="Brinkac L.M."/>
            <person name="Beanan M.J."/>
            <person name="Haft D.H."/>
            <person name="Nelson W.C."/>
            <person name="Davidsen T.M."/>
            <person name="Zafar N."/>
            <person name="Zhou L."/>
            <person name="Liu J."/>
            <person name="Yuan Q."/>
            <person name="Khouri H.M."/>
            <person name="Fedorova N.B."/>
            <person name="Tran B."/>
            <person name="Russell D."/>
            <person name="Berry K.J."/>
            <person name="Utterback T.R."/>
            <person name="Van Aken S.E."/>
            <person name="Feldblyum T.V."/>
            <person name="D'Ascenzo M."/>
            <person name="Deng W.-L."/>
            <person name="Ramos A.R."/>
            <person name="Alfano J.R."/>
            <person name="Cartinhour S."/>
            <person name="Chatterjee A.K."/>
            <person name="Delaney T.P."/>
            <person name="Lazarowitz S.G."/>
            <person name="Martin G.B."/>
            <person name="Schneider D.J."/>
            <person name="Tang X."/>
            <person name="Bender C.L."/>
            <person name="White O."/>
            <person name="Fraser C.M."/>
            <person name="Collmer A."/>
        </authorList>
    </citation>
    <scope>NUCLEOTIDE SEQUENCE [LARGE SCALE GENOMIC DNA]</scope>
    <source>
        <strain>ATCC BAA-871 / DC3000</strain>
    </source>
</reference>
<sequence length="511" mass="57111">MSVELWQQCVELLRDELPAQQFNTWIRPLQVEAEGDELRVYAPNRFVLDWVNEKYLGRLLELLGERGQGMAPALSLLIGSKRSSAPRAAPNAPLAAAASQALSGNSVSSVSASAPAMAVPAPMVAAPVPVHNVATHDEPSRDSFDPMAGASSQQAPARAEQRTVQVEGALKHTSYLNRTFTFENFVEGKSNQLARAAAWQVADNPKHGYNPLFLYGGVGLGKTHLMHAVGNHLLKKNPNAKVVYLHSERFVADMVKALQLNAINEFKRFYRSVDALLIDDIQFFARKERSQEEFFHTFNALLEGGQQVILTSDRYPKEIEGLEERLKSRFGWGLTVAVEPPELETRVAILMKKADQAKVDLPHDAAFFIAQRIRSNVRELEGALKRVIAHSHFMGRDITIELIRESLKDLLALQDKLVSVDNIQRTVAEYYKIKISDLLSKRRSRSVARPRQVAMALSKELTNHSLPEIGDVFGGRDHTTVLHACRKINELKESDADIREDYKNLLRTLTT</sequence>
<gene>
    <name evidence="1" type="primary">dnaA</name>
    <name type="ordered locus">PSPTO_0001</name>
</gene>
<name>DNAA_PSESM</name>
<evidence type="ECO:0000255" key="1">
    <source>
        <dbReference type="HAMAP-Rule" id="MF_00377"/>
    </source>
</evidence>
<evidence type="ECO:0000256" key="2">
    <source>
        <dbReference type="SAM" id="MobiDB-lite"/>
    </source>
</evidence>
<accession>Q88BK3</accession>
<proteinExistence type="inferred from homology"/>
<comment type="function">
    <text evidence="1">Plays an essential role in the initiation and regulation of chromosomal replication. ATP-DnaA binds to the origin of replication (oriC) to initiate formation of the DNA replication initiation complex once per cell cycle. Binds the DnaA box (a 9 base pair repeat at the origin) and separates the double-stranded (ds)DNA. Forms a right-handed helical filament on oriC DNA; dsDNA binds to the exterior of the filament while single-stranded (ss)DNA is stabiized in the filament's interior. The ATP-DnaA-oriC complex binds and stabilizes one strand of the AT-rich DNA unwinding element (DUE), permitting loading of DNA polymerase. After initiation quickly degrades to an ADP-DnaA complex that is not apt for DNA replication. Binds acidic phospholipids.</text>
</comment>
<comment type="subunit">
    <text evidence="1">Oligomerizes as a right-handed, spiral filament on DNA at oriC.</text>
</comment>
<comment type="subcellular location">
    <subcellularLocation>
        <location evidence="1">Cytoplasm</location>
    </subcellularLocation>
</comment>
<comment type="domain">
    <text evidence="1">Domain I is involved in oligomerization and binding regulators, domain II is flexibile and of varying length in different bacteria, domain III forms the AAA+ region, while domain IV binds dsDNA.</text>
</comment>
<comment type="similarity">
    <text evidence="1">Belongs to the DnaA family.</text>
</comment>
<protein>
    <recommendedName>
        <fullName evidence="1">Chromosomal replication initiator protein DnaA</fullName>
    </recommendedName>
</protein>
<feature type="chain" id="PRO_0000114241" description="Chromosomal replication initiator protein DnaA">
    <location>
        <begin position="1"/>
        <end position="511"/>
    </location>
</feature>
<feature type="region of interest" description="Domain I, interacts with DnaA modulators" evidence="1">
    <location>
        <begin position="1"/>
        <end position="87"/>
    </location>
</feature>
<feature type="region of interest" description="Domain II" evidence="1">
    <location>
        <begin position="87"/>
        <end position="174"/>
    </location>
</feature>
<feature type="region of interest" description="Disordered" evidence="2">
    <location>
        <begin position="133"/>
        <end position="160"/>
    </location>
</feature>
<feature type="region of interest" description="Domain III, AAA+ region" evidence="1">
    <location>
        <begin position="175"/>
        <end position="391"/>
    </location>
</feature>
<feature type="region of interest" description="Domain IV, binds dsDNA" evidence="1">
    <location>
        <begin position="392"/>
        <end position="511"/>
    </location>
</feature>
<feature type="compositionally biased region" description="Basic and acidic residues" evidence="2">
    <location>
        <begin position="134"/>
        <end position="144"/>
    </location>
</feature>
<feature type="binding site" evidence="1">
    <location>
        <position position="219"/>
    </location>
    <ligand>
        <name>ATP</name>
        <dbReference type="ChEBI" id="CHEBI:30616"/>
    </ligand>
</feature>
<feature type="binding site" evidence="1">
    <location>
        <position position="221"/>
    </location>
    <ligand>
        <name>ATP</name>
        <dbReference type="ChEBI" id="CHEBI:30616"/>
    </ligand>
</feature>
<feature type="binding site" evidence="1">
    <location>
        <position position="222"/>
    </location>
    <ligand>
        <name>ATP</name>
        <dbReference type="ChEBI" id="CHEBI:30616"/>
    </ligand>
</feature>
<feature type="binding site" evidence="1">
    <location>
        <position position="223"/>
    </location>
    <ligand>
        <name>ATP</name>
        <dbReference type="ChEBI" id="CHEBI:30616"/>
    </ligand>
</feature>
<dbReference type="EMBL" id="AE016853">
    <property type="protein sequence ID" value="AAO53558.1"/>
    <property type="molecule type" value="Genomic_DNA"/>
</dbReference>
<dbReference type="RefSeq" id="NP_789863.1">
    <property type="nucleotide sequence ID" value="NC_004578.1"/>
</dbReference>
<dbReference type="RefSeq" id="WP_011102932.1">
    <property type="nucleotide sequence ID" value="NC_004578.1"/>
</dbReference>
<dbReference type="SMR" id="Q88BK3"/>
<dbReference type="STRING" id="223283.PSPTO_0001"/>
<dbReference type="GeneID" id="1181609"/>
<dbReference type="KEGG" id="pst:PSPTO_0001"/>
<dbReference type="PATRIC" id="fig|223283.9.peg.1"/>
<dbReference type="eggNOG" id="COG0593">
    <property type="taxonomic scope" value="Bacteria"/>
</dbReference>
<dbReference type="HOGENOM" id="CLU_026910_0_1_6"/>
<dbReference type="OrthoDB" id="9807019at2"/>
<dbReference type="PhylomeDB" id="Q88BK3"/>
<dbReference type="Proteomes" id="UP000002515">
    <property type="component" value="Chromosome"/>
</dbReference>
<dbReference type="GO" id="GO:0005737">
    <property type="term" value="C:cytoplasm"/>
    <property type="evidence" value="ECO:0007669"/>
    <property type="project" value="UniProtKB-SubCell"/>
</dbReference>
<dbReference type="GO" id="GO:0005886">
    <property type="term" value="C:plasma membrane"/>
    <property type="evidence" value="ECO:0007669"/>
    <property type="project" value="TreeGrafter"/>
</dbReference>
<dbReference type="GO" id="GO:0005524">
    <property type="term" value="F:ATP binding"/>
    <property type="evidence" value="ECO:0007669"/>
    <property type="project" value="UniProtKB-UniRule"/>
</dbReference>
<dbReference type="GO" id="GO:0016887">
    <property type="term" value="F:ATP hydrolysis activity"/>
    <property type="evidence" value="ECO:0007669"/>
    <property type="project" value="InterPro"/>
</dbReference>
<dbReference type="GO" id="GO:0003688">
    <property type="term" value="F:DNA replication origin binding"/>
    <property type="evidence" value="ECO:0007669"/>
    <property type="project" value="UniProtKB-UniRule"/>
</dbReference>
<dbReference type="GO" id="GO:0008289">
    <property type="term" value="F:lipid binding"/>
    <property type="evidence" value="ECO:0007669"/>
    <property type="project" value="UniProtKB-KW"/>
</dbReference>
<dbReference type="GO" id="GO:0006270">
    <property type="term" value="P:DNA replication initiation"/>
    <property type="evidence" value="ECO:0007669"/>
    <property type="project" value="UniProtKB-UniRule"/>
</dbReference>
<dbReference type="GO" id="GO:0006275">
    <property type="term" value="P:regulation of DNA replication"/>
    <property type="evidence" value="ECO:0007669"/>
    <property type="project" value="UniProtKB-UniRule"/>
</dbReference>
<dbReference type="CDD" id="cd00009">
    <property type="entry name" value="AAA"/>
    <property type="match status" value="1"/>
</dbReference>
<dbReference type="CDD" id="cd06571">
    <property type="entry name" value="Bac_DnaA_C"/>
    <property type="match status" value="1"/>
</dbReference>
<dbReference type="FunFam" id="1.10.1750.10:FF:000001">
    <property type="entry name" value="Chromosomal replication initiator protein DnaA"/>
    <property type="match status" value="1"/>
</dbReference>
<dbReference type="FunFam" id="1.10.8.60:FF:000003">
    <property type="entry name" value="Chromosomal replication initiator protein DnaA"/>
    <property type="match status" value="1"/>
</dbReference>
<dbReference type="FunFam" id="3.40.50.300:FF:000103">
    <property type="entry name" value="Chromosomal replication initiator protein DnaA"/>
    <property type="match status" value="1"/>
</dbReference>
<dbReference type="Gene3D" id="1.10.1750.10">
    <property type="match status" value="1"/>
</dbReference>
<dbReference type="Gene3D" id="1.10.8.60">
    <property type="match status" value="1"/>
</dbReference>
<dbReference type="Gene3D" id="3.30.300.180">
    <property type="match status" value="1"/>
</dbReference>
<dbReference type="Gene3D" id="3.40.50.300">
    <property type="entry name" value="P-loop containing nucleotide triphosphate hydrolases"/>
    <property type="match status" value="1"/>
</dbReference>
<dbReference type="HAMAP" id="MF_00377">
    <property type="entry name" value="DnaA_bact"/>
    <property type="match status" value="1"/>
</dbReference>
<dbReference type="InterPro" id="IPR003593">
    <property type="entry name" value="AAA+_ATPase"/>
</dbReference>
<dbReference type="InterPro" id="IPR001957">
    <property type="entry name" value="Chromosome_initiator_DnaA"/>
</dbReference>
<dbReference type="InterPro" id="IPR020591">
    <property type="entry name" value="Chromosome_initiator_DnaA-like"/>
</dbReference>
<dbReference type="InterPro" id="IPR018312">
    <property type="entry name" value="Chromosome_initiator_DnaA_CS"/>
</dbReference>
<dbReference type="InterPro" id="IPR013159">
    <property type="entry name" value="DnaA_C"/>
</dbReference>
<dbReference type="InterPro" id="IPR013317">
    <property type="entry name" value="DnaA_dom"/>
</dbReference>
<dbReference type="InterPro" id="IPR024633">
    <property type="entry name" value="DnaA_N_dom"/>
</dbReference>
<dbReference type="InterPro" id="IPR038454">
    <property type="entry name" value="DnaA_N_sf"/>
</dbReference>
<dbReference type="InterPro" id="IPR027417">
    <property type="entry name" value="P-loop_NTPase"/>
</dbReference>
<dbReference type="InterPro" id="IPR010921">
    <property type="entry name" value="Trp_repressor/repl_initiator"/>
</dbReference>
<dbReference type="NCBIfam" id="TIGR00362">
    <property type="entry name" value="DnaA"/>
    <property type="match status" value="1"/>
</dbReference>
<dbReference type="PANTHER" id="PTHR30050">
    <property type="entry name" value="CHROMOSOMAL REPLICATION INITIATOR PROTEIN DNAA"/>
    <property type="match status" value="1"/>
</dbReference>
<dbReference type="PANTHER" id="PTHR30050:SF2">
    <property type="entry name" value="CHROMOSOMAL REPLICATION INITIATOR PROTEIN DNAA"/>
    <property type="match status" value="1"/>
</dbReference>
<dbReference type="Pfam" id="PF00308">
    <property type="entry name" value="Bac_DnaA"/>
    <property type="match status" value="1"/>
</dbReference>
<dbReference type="Pfam" id="PF08299">
    <property type="entry name" value="Bac_DnaA_C"/>
    <property type="match status" value="1"/>
</dbReference>
<dbReference type="Pfam" id="PF11638">
    <property type="entry name" value="DnaA_N"/>
    <property type="match status" value="1"/>
</dbReference>
<dbReference type="PRINTS" id="PR00051">
    <property type="entry name" value="DNAA"/>
</dbReference>
<dbReference type="SMART" id="SM00382">
    <property type="entry name" value="AAA"/>
    <property type="match status" value="1"/>
</dbReference>
<dbReference type="SMART" id="SM00760">
    <property type="entry name" value="Bac_DnaA_C"/>
    <property type="match status" value="1"/>
</dbReference>
<dbReference type="SUPFAM" id="SSF52540">
    <property type="entry name" value="P-loop containing nucleoside triphosphate hydrolases"/>
    <property type="match status" value="1"/>
</dbReference>
<dbReference type="SUPFAM" id="SSF48295">
    <property type="entry name" value="TrpR-like"/>
    <property type="match status" value="1"/>
</dbReference>
<dbReference type="PROSITE" id="PS01008">
    <property type="entry name" value="DNAA"/>
    <property type="match status" value="1"/>
</dbReference>
<organism>
    <name type="scientific">Pseudomonas syringae pv. tomato (strain ATCC BAA-871 / DC3000)</name>
    <dbReference type="NCBI Taxonomy" id="223283"/>
    <lineage>
        <taxon>Bacteria</taxon>
        <taxon>Pseudomonadati</taxon>
        <taxon>Pseudomonadota</taxon>
        <taxon>Gammaproteobacteria</taxon>
        <taxon>Pseudomonadales</taxon>
        <taxon>Pseudomonadaceae</taxon>
        <taxon>Pseudomonas</taxon>
    </lineage>
</organism>